<name>MUTS_ANAPZ</name>
<gene>
    <name evidence="1" type="primary">mutS</name>
    <name type="ordered locus">APH_0857</name>
</gene>
<dbReference type="EMBL" id="CP000235">
    <property type="protein sequence ID" value="ABD43661.1"/>
    <property type="molecule type" value="Genomic_DNA"/>
</dbReference>
<dbReference type="RefSeq" id="WP_011450950.1">
    <property type="nucleotide sequence ID" value="NC_007797.1"/>
</dbReference>
<dbReference type="SMR" id="Q2GJL7"/>
<dbReference type="STRING" id="212042.APH_0857"/>
<dbReference type="PaxDb" id="212042-APH_0857"/>
<dbReference type="EnsemblBacteria" id="ABD43661">
    <property type="protein sequence ID" value="ABD43661"/>
    <property type="gene ID" value="APH_0857"/>
</dbReference>
<dbReference type="GeneID" id="92748147"/>
<dbReference type="KEGG" id="aph:APH_0857"/>
<dbReference type="eggNOG" id="COG0249">
    <property type="taxonomic scope" value="Bacteria"/>
</dbReference>
<dbReference type="HOGENOM" id="CLU_002472_4_0_5"/>
<dbReference type="Proteomes" id="UP000001943">
    <property type="component" value="Chromosome"/>
</dbReference>
<dbReference type="GO" id="GO:0005829">
    <property type="term" value="C:cytosol"/>
    <property type="evidence" value="ECO:0007669"/>
    <property type="project" value="TreeGrafter"/>
</dbReference>
<dbReference type="GO" id="GO:0005524">
    <property type="term" value="F:ATP binding"/>
    <property type="evidence" value="ECO:0007669"/>
    <property type="project" value="UniProtKB-UniRule"/>
</dbReference>
<dbReference type="GO" id="GO:0140664">
    <property type="term" value="F:ATP-dependent DNA damage sensor activity"/>
    <property type="evidence" value="ECO:0007669"/>
    <property type="project" value="InterPro"/>
</dbReference>
<dbReference type="GO" id="GO:0003684">
    <property type="term" value="F:damaged DNA binding"/>
    <property type="evidence" value="ECO:0007669"/>
    <property type="project" value="UniProtKB-UniRule"/>
</dbReference>
<dbReference type="GO" id="GO:0030983">
    <property type="term" value="F:mismatched DNA binding"/>
    <property type="evidence" value="ECO:0007669"/>
    <property type="project" value="InterPro"/>
</dbReference>
<dbReference type="GO" id="GO:0006298">
    <property type="term" value="P:mismatch repair"/>
    <property type="evidence" value="ECO:0007669"/>
    <property type="project" value="UniProtKB-UniRule"/>
</dbReference>
<dbReference type="FunFam" id="3.40.1170.10:FF:000001">
    <property type="entry name" value="DNA mismatch repair protein MutS"/>
    <property type="match status" value="1"/>
</dbReference>
<dbReference type="Gene3D" id="1.10.1420.10">
    <property type="match status" value="2"/>
</dbReference>
<dbReference type="Gene3D" id="3.40.1170.10">
    <property type="entry name" value="DNA repair protein MutS, domain I"/>
    <property type="match status" value="1"/>
</dbReference>
<dbReference type="Gene3D" id="3.30.420.110">
    <property type="entry name" value="MutS, connector domain"/>
    <property type="match status" value="1"/>
</dbReference>
<dbReference type="Gene3D" id="3.40.50.300">
    <property type="entry name" value="P-loop containing nucleotide triphosphate hydrolases"/>
    <property type="match status" value="1"/>
</dbReference>
<dbReference type="HAMAP" id="MF_00096">
    <property type="entry name" value="MutS"/>
    <property type="match status" value="1"/>
</dbReference>
<dbReference type="InterPro" id="IPR005748">
    <property type="entry name" value="DNA_mismatch_repair_MutS"/>
</dbReference>
<dbReference type="InterPro" id="IPR007695">
    <property type="entry name" value="DNA_mismatch_repair_MutS-lik_N"/>
</dbReference>
<dbReference type="InterPro" id="IPR017261">
    <property type="entry name" value="DNA_mismatch_repair_MutS/MSH"/>
</dbReference>
<dbReference type="InterPro" id="IPR000432">
    <property type="entry name" value="DNA_mismatch_repair_MutS_C"/>
</dbReference>
<dbReference type="InterPro" id="IPR007861">
    <property type="entry name" value="DNA_mismatch_repair_MutS_clamp"/>
</dbReference>
<dbReference type="InterPro" id="IPR007696">
    <property type="entry name" value="DNA_mismatch_repair_MutS_core"/>
</dbReference>
<dbReference type="InterPro" id="IPR016151">
    <property type="entry name" value="DNA_mismatch_repair_MutS_N"/>
</dbReference>
<dbReference type="InterPro" id="IPR036187">
    <property type="entry name" value="DNA_mismatch_repair_MutS_sf"/>
</dbReference>
<dbReference type="InterPro" id="IPR007860">
    <property type="entry name" value="DNA_mmatch_repair_MutS_con_dom"/>
</dbReference>
<dbReference type="InterPro" id="IPR045076">
    <property type="entry name" value="MutS"/>
</dbReference>
<dbReference type="InterPro" id="IPR036678">
    <property type="entry name" value="MutS_con_dom_sf"/>
</dbReference>
<dbReference type="InterPro" id="IPR027417">
    <property type="entry name" value="P-loop_NTPase"/>
</dbReference>
<dbReference type="NCBIfam" id="TIGR01070">
    <property type="entry name" value="mutS1"/>
    <property type="match status" value="1"/>
</dbReference>
<dbReference type="NCBIfam" id="NF003810">
    <property type="entry name" value="PRK05399.1"/>
    <property type="match status" value="1"/>
</dbReference>
<dbReference type="PANTHER" id="PTHR11361:SF34">
    <property type="entry name" value="DNA MISMATCH REPAIR PROTEIN MSH1, MITOCHONDRIAL"/>
    <property type="match status" value="1"/>
</dbReference>
<dbReference type="PANTHER" id="PTHR11361">
    <property type="entry name" value="DNA MISMATCH REPAIR PROTEIN MUTS FAMILY MEMBER"/>
    <property type="match status" value="1"/>
</dbReference>
<dbReference type="Pfam" id="PF01624">
    <property type="entry name" value="MutS_I"/>
    <property type="match status" value="1"/>
</dbReference>
<dbReference type="Pfam" id="PF05188">
    <property type="entry name" value="MutS_II"/>
    <property type="match status" value="1"/>
</dbReference>
<dbReference type="Pfam" id="PF05192">
    <property type="entry name" value="MutS_III"/>
    <property type="match status" value="1"/>
</dbReference>
<dbReference type="Pfam" id="PF05190">
    <property type="entry name" value="MutS_IV"/>
    <property type="match status" value="1"/>
</dbReference>
<dbReference type="Pfam" id="PF00488">
    <property type="entry name" value="MutS_V"/>
    <property type="match status" value="1"/>
</dbReference>
<dbReference type="PIRSF" id="PIRSF037677">
    <property type="entry name" value="DNA_mis_repair_Msh6"/>
    <property type="match status" value="1"/>
</dbReference>
<dbReference type="SMART" id="SM00534">
    <property type="entry name" value="MUTSac"/>
    <property type="match status" value="1"/>
</dbReference>
<dbReference type="SMART" id="SM00533">
    <property type="entry name" value="MUTSd"/>
    <property type="match status" value="1"/>
</dbReference>
<dbReference type="SUPFAM" id="SSF55271">
    <property type="entry name" value="DNA repair protein MutS, domain I"/>
    <property type="match status" value="1"/>
</dbReference>
<dbReference type="SUPFAM" id="SSF53150">
    <property type="entry name" value="DNA repair protein MutS, domain II"/>
    <property type="match status" value="1"/>
</dbReference>
<dbReference type="SUPFAM" id="SSF48334">
    <property type="entry name" value="DNA repair protein MutS, domain III"/>
    <property type="match status" value="1"/>
</dbReference>
<dbReference type="SUPFAM" id="SSF52540">
    <property type="entry name" value="P-loop containing nucleoside triphosphate hydrolases"/>
    <property type="match status" value="1"/>
</dbReference>
<dbReference type="PROSITE" id="PS00486">
    <property type="entry name" value="DNA_MISMATCH_REPAIR_2"/>
    <property type="match status" value="1"/>
</dbReference>
<comment type="function">
    <text evidence="1">This protein is involved in the repair of mismatches in DNA. It is possible that it carries out the mismatch recognition step. This protein has a weak ATPase activity.</text>
</comment>
<comment type="similarity">
    <text evidence="1">Belongs to the DNA mismatch repair MutS family.</text>
</comment>
<sequence>MSNNTEYTPVLRQYRALKEQYGECLLLYRLGDFYELFFEDAVIASKTLNIVLTKRGTDTPMCGVPYHSSESYIGRLVKSGYKVAVCEQIETAEEARKRSVRALVRREVTRIVTPGTLVEDSLLDAKENNYLACISNIGERYGVAWMELSTGLFHVRASKLEDLDSEIQRLGPSELLISDKLKEQQSMELVLKRHRCAITSHNESFFDSKRAEKVLCGVYGVTTVQGLGDFEEVEVSACGSLLEYVRMTQRGSLPKLSYPKVRDSNSFVLIDGPALRNLELFSTQSGEKKGSLISTIDHTVTAMGSRMLKRYLAFPVACHNVINGRQDAVEFFVSNRSLCEVIRGVINGFPDIERILTRVKFSKCSPKDIHLLGRALSKIFELSRIISRSTHAIISKILVSLGDHRDLLKLISEVMLENNATITKDGGFINPGCNERLAELARIQNDSGVLIQRLRDKYRALTGISSLKILSNNLLGYYIEVSSSYKVSDESFVRRQSLANSTRYTTAELKELEERIVSAQSESADLEAQIFKGLCSRIADECQDIGLAAEAVAELDVLTTLAEVAVENNYVRPIVDDSKQFKIVRGRHPVVEVGTDFIANDCDLSEGNSMSLITGPNMAGKSTFLRQNALIAVLAHIGSFVPAEHAHIGVIDKIFSRVGASDNIALGHSTFMVEMVETAAILNQATSKSLVILDEIGRGTAINDGLSIALAAIEHIHDVTKSRAICATHYHELPKLSSHFENIRFFCLRIEEWKGEVVFLHELIPGISSRSYGIHVAGLAGFPKGALERAKFFMSKFDEAEHYRSIDSIDITSGRHITDE</sequence>
<evidence type="ECO:0000255" key="1">
    <source>
        <dbReference type="HAMAP-Rule" id="MF_00096"/>
    </source>
</evidence>
<organism>
    <name type="scientific">Anaplasma phagocytophilum (strain HZ)</name>
    <dbReference type="NCBI Taxonomy" id="212042"/>
    <lineage>
        <taxon>Bacteria</taxon>
        <taxon>Pseudomonadati</taxon>
        <taxon>Pseudomonadota</taxon>
        <taxon>Alphaproteobacteria</taxon>
        <taxon>Rickettsiales</taxon>
        <taxon>Anaplasmataceae</taxon>
        <taxon>Anaplasma</taxon>
        <taxon>phagocytophilum group</taxon>
    </lineage>
</organism>
<reference key="1">
    <citation type="journal article" date="2006" name="PLoS Genet.">
        <title>Comparative genomics of emerging human ehrlichiosis agents.</title>
        <authorList>
            <person name="Dunning Hotopp J.C."/>
            <person name="Lin M."/>
            <person name="Madupu R."/>
            <person name="Crabtree J."/>
            <person name="Angiuoli S.V."/>
            <person name="Eisen J.A."/>
            <person name="Seshadri R."/>
            <person name="Ren Q."/>
            <person name="Wu M."/>
            <person name="Utterback T.R."/>
            <person name="Smith S."/>
            <person name="Lewis M."/>
            <person name="Khouri H."/>
            <person name="Zhang C."/>
            <person name="Niu H."/>
            <person name="Lin Q."/>
            <person name="Ohashi N."/>
            <person name="Zhi N."/>
            <person name="Nelson W.C."/>
            <person name="Brinkac L.M."/>
            <person name="Dodson R.J."/>
            <person name="Rosovitz M.J."/>
            <person name="Sundaram J.P."/>
            <person name="Daugherty S.C."/>
            <person name="Davidsen T."/>
            <person name="Durkin A.S."/>
            <person name="Gwinn M.L."/>
            <person name="Haft D.H."/>
            <person name="Selengut J.D."/>
            <person name="Sullivan S.A."/>
            <person name="Zafar N."/>
            <person name="Zhou L."/>
            <person name="Benahmed F."/>
            <person name="Forberger H."/>
            <person name="Halpin R."/>
            <person name="Mulligan S."/>
            <person name="Robinson J."/>
            <person name="White O."/>
            <person name="Rikihisa Y."/>
            <person name="Tettelin H."/>
        </authorList>
    </citation>
    <scope>NUCLEOTIDE SEQUENCE [LARGE SCALE GENOMIC DNA]</scope>
    <source>
        <strain>HZ</strain>
    </source>
</reference>
<keyword id="KW-0067">ATP-binding</keyword>
<keyword id="KW-0227">DNA damage</keyword>
<keyword id="KW-0234">DNA repair</keyword>
<keyword id="KW-0238">DNA-binding</keyword>
<keyword id="KW-0547">Nucleotide-binding</keyword>
<protein>
    <recommendedName>
        <fullName evidence="1">DNA mismatch repair protein MutS</fullName>
    </recommendedName>
</protein>
<accession>Q2GJL7</accession>
<proteinExistence type="inferred from homology"/>
<feature type="chain" id="PRO_0000335113" description="DNA mismatch repair protein MutS">
    <location>
        <begin position="1"/>
        <end position="820"/>
    </location>
</feature>
<feature type="binding site" evidence="1">
    <location>
        <begin position="615"/>
        <end position="622"/>
    </location>
    <ligand>
        <name>ATP</name>
        <dbReference type="ChEBI" id="CHEBI:30616"/>
    </ligand>
</feature>